<reference key="1">
    <citation type="journal article" date="2006" name="Virology">
        <title>The genome of Epstein-Barr virus type 2 strain AG876.</title>
        <authorList>
            <person name="Dolan A."/>
            <person name="Addison C."/>
            <person name="Gatherer D."/>
            <person name="Davison A.J."/>
            <person name="McGeoch D.J."/>
        </authorList>
    </citation>
    <scope>NUCLEOTIDE SEQUENCE [LARGE SCALE GENOMIC DNA]</scope>
</reference>
<feature type="chain" id="PRO_0000408267" description="Lytic switch protein BZLF1">
    <location>
        <begin position="1"/>
        <end position="245"/>
    </location>
</feature>
<feature type="domain" description="bZIP">
    <location>
        <begin position="178"/>
        <end position="228"/>
    </location>
</feature>
<feature type="region of interest" description="Transactivation" evidence="2">
    <location>
        <begin position="1"/>
        <end position="167"/>
    </location>
</feature>
<feature type="region of interest" description="Disordered" evidence="3">
    <location>
        <begin position="140"/>
        <end position="167"/>
    </location>
</feature>
<feature type="region of interest" description="Basic motif" evidence="1">
    <location>
        <begin position="178"/>
        <end position="195"/>
    </location>
</feature>
<feature type="region of interest" description="Leucine-zipper" evidence="1">
    <location>
        <begin position="196"/>
        <end position="228"/>
    </location>
</feature>
<feature type="region of interest" description="Accessory activation domain" evidence="2">
    <location>
        <begin position="229"/>
        <end position="245"/>
    </location>
</feature>
<feature type="short sequence motif" description="Bipartite nuclear localization signal" evidence="2">
    <location>
        <begin position="157"/>
        <end position="194"/>
    </location>
</feature>
<feature type="site" description="Recognition of methylation, required for disruption of latency" evidence="2">
    <location>
        <position position="186"/>
    </location>
</feature>
<feature type="site" description="Recognition of methylation" evidence="2">
    <location>
        <position position="190"/>
    </location>
</feature>
<feature type="modified residue" description="Phosphothreonine" evidence="2">
    <location>
        <position position="14"/>
    </location>
</feature>
<feature type="modified residue" description="Phosphothreonine" evidence="2">
    <location>
        <position position="159"/>
    </location>
</feature>
<feature type="modified residue" description="Phosphoserine" evidence="2">
    <location>
        <position position="167"/>
    </location>
</feature>
<feature type="modified residue" description="Phosphoserine" evidence="2">
    <location>
        <position position="173"/>
    </location>
</feature>
<feature type="modified residue" description="Phosphoserine" evidence="2">
    <location>
        <position position="186"/>
    </location>
</feature>
<proteinExistence type="inferred from homology"/>
<organism>
    <name type="scientific">Epstein-Barr virus (strain AG876)</name>
    <name type="common">HHV-4</name>
    <name type="synonym">Human herpesvirus 4</name>
    <dbReference type="NCBI Taxonomy" id="82830"/>
    <lineage>
        <taxon>Viruses</taxon>
        <taxon>Duplodnaviria</taxon>
        <taxon>Heunggongvirae</taxon>
        <taxon>Peploviricota</taxon>
        <taxon>Herviviricetes</taxon>
        <taxon>Herpesvirales</taxon>
        <taxon>Orthoherpesviridae</taxon>
        <taxon>Gammaherpesvirinae</taxon>
        <taxon>Lymphocryptovirus</taxon>
        <taxon>Lymphocryptovirus humangamma4</taxon>
        <taxon>Epstein-Barr virus (strain GD1)</taxon>
    </lineage>
</organism>
<name>BZLF1_EBVA8</name>
<accession>Q1HVG1</accession>
<dbReference type="EMBL" id="DQ279927">
    <property type="protein sequence ID" value="ABB89248.1"/>
    <property type="molecule type" value="Genomic_DNA"/>
</dbReference>
<dbReference type="RefSeq" id="YP_001129467.1">
    <property type="nucleotide sequence ID" value="NC_009334.1"/>
</dbReference>
<dbReference type="SMR" id="Q1HVG1"/>
<dbReference type="KEGG" id="vg:5176210"/>
<dbReference type="Proteomes" id="UP000007639">
    <property type="component" value="Genome"/>
</dbReference>
<dbReference type="GO" id="GO:0042025">
    <property type="term" value="C:host cell nucleus"/>
    <property type="evidence" value="ECO:0007669"/>
    <property type="project" value="UniProtKB-SubCell"/>
</dbReference>
<dbReference type="GO" id="GO:0003677">
    <property type="term" value="F:DNA binding"/>
    <property type="evidence" value="ECO:0007669"/>
    <property type="project" value="UniProtKB-KW"/>
</dbReference>
<dbReference type="GO" id="GO:0003700">
    <property type="term" value="F:DNA-binding transcription factor activity"/>
    <property type="evidence" value="ECO:0007669"/>
    <property type="project" value="InterPro"/>
</dbReference>
<dbReference type="GO" id="GO:0039646">
    <property type="term" value="P:symbiont-mediated perturbation of host cell cycle G0/G1 transition checkpoint"/>
    <property type="evidence" value="ECO:0007669"/>
    <property type="project" value="UniProtKB-KW"/>
</dbReference>
<dbReference type="GO" id="GO:0044071">
    <property type="term" value="P:symbiont-mediated perturbation of host cell cycle progression"/>
    <property type="evidence" value="ECO:0007669"/>
    <property type="project" value="UniProtKB-KW"/>
</dbReference>
<dbReference type="CDD" id="cd14809">
    <property type="entry name" value="bZIP_AUREO-like"/>
    <property type="match status" value="1"/>
</dbReference>
<dbReference type="Gene3D" id="1.20.5.170">
    <property type="match status" value="1"/>
</dbReference>
<dbReference type="InterPro" id="IPR004827">
    <property type="entry name" value="bZIP"/>
</dbReference>
<dbReference type="InterPro" id="IPR046347">
    <property type="entry name" value="bZIP_sf"/>
</dbReference>
<dbReference type="InterPro" id="IPR017339">
    <property type="entry name" value="BZLF1_HHV-4"/>
</dbReference>
<dbReference type="PIRSF" id="PIRSF037966">
    <property type="entry name" value="BZLF1"/>
    <property type="match status" value="1"/>
</dbReference>
<dbReference type="SUPFAM" id="SSF57959">
    <property type="entry name" value="Leucine zipper domain"/>
    <property type="match status" value="1"/>
</dbReference>
<dbReference type="PROSITE" id="PS00036">
    <property type="entry name" value="BZIP_BASIC"/>
    <property type="match status" value="1"/>
</dbReference>
<organismHost>
    <name type="scientific">Homo sapiens</name>
    <name type="common">Human</name>
    <dbReference type="NCBI Taxonomy" id="9606"/>
</organismHost>
<evidence type="ECO:0000250" key="1"/>
<evidence type="ECO:0000250" key="2">
    <source>
        <dbReference type="UniProtKB" id="P03206"/>
    </source>
</evidence>
<evidence type="ECO:0000256" key="3">
    <source>
        <dbReference type="SAM" id="MobiDB-lite"/>
    </source>
</evidence>
<evidence type="ECO:0000305" key="4"/>
<keyword id="KW-0238">DNA-binding</keyword>
<keyword id="KW-0244">Early protein</keyword>
<keyword id="KW-1077">G0/G1 host cell cycle checkpoint dysregulation by virus</keyword>
<keyword id="KW-1048">Host nucleus</keyword>
<keyword id="KW-0945">Host-virus interaction</keyword>
<keyword id="KW-1121">Modulation of host cell cycle by virus</keyword>
<keyword id="KW-0597">Phosphoprotein</keyword>
<keyword id="KW-1185">Reference proteome</keyword>
<keyword id="KW-0804">Transcription</keyword>
<keyword id="KW-0805">Transcription regulation</keyword>
<gene>
    <name type="ORF">BZLF1</name>
</gene>
<comment type="function">
    <text evidence="2">Transcription factor that acts as a molecular switch to induce the transition from the latent to the lytic or productive phase of the virus cycle. Mediates the switch from the latent to the lytic cycle of infection in cells containing a highly methylated viral genome. Probably binds to silenced chromatin and recruits host chromatin-remodeling enzymes. Regulates this switch by binding to 2 types of ZEBRA response elements (ZREs): the CpG-free AP-1 like elements (latency) and the methylated CpG-containing elements (lytic replication). Activates preferentially the methylated forms of the viral lytic R (BRLF1) and Na (BRRF1) gene promoters, the latters being the first genes activated during Z-mediated reactivation in latently infected cells. BZLF1 and BRLF1 act together to trigger lytic replication. Also binds the lytic origin of replication, oriLyt. Induces G1 cell cycle arrest by stabilizing the host CCAAT/enhancer binding protein CEBPA. This function is important because the lytic cycle preferentially takes place in host cells arrested in G1.</text>
</comment>
<comment type="subunit">
    <text evidence="2">Homodimer. Interacts (via b-ZIP domain) with the DNA polymerase processivity factor BMRF1 (via N-terminus); this interaction may inhibit BZLF1-induced transcription of the BMRF1 promoter. Interacts with human UBN1, CRTC2 and RACK1. Interacts (via N-terminus) with human PAX5 (via N-terminus); this interaction inhibits BZLF1-mediated lytic viral reactivation. Interacts (via leucine-zipper domain) with host CEBPA; this interaction induces G1 host cell cycle arrest. Interacts (via C-terminus) with host TP53BP1 (via C-terminus); this interaction is involved in the activation of the viral lytic cycle. Interacts with host chromatin-remodeling ATPase INO80; this interaction participates to the activation of early lytic viral genes by BZLF1. Interacts with host regulator of chromatin SMARCA5/hSNF2H; this interaction participates to the activation of early lytic viral genes by BZLF1. Interacts with host PLSCR1/Phospholipid scramblase 1; this interaction negatively regulates the transcriptional regulatory activity of BZLF1 by preventing the formation of the BZLF1-CBP complex.</text>
</comment>
<comment type="subcellular location">
    <subcellularLocation>
        <location evidence="2">Host nucleus</location>
    </subcellularLocation>
</comment>
<comment type="induction">
    <text evidence="4">Expressed in the immediate-early phase of the viral replicative cycle (Probable). It is expressed again during the switch between latency and lytic replication (Probable).</text>
</comment>
<comment type="domain">
    <text evidence="2">Recognizes the CpG methylation marks through a specific serine and a methylcytosine-arginine-guanine triad. The leucine zipper region contributes to homodimerization. The basic motif is involved in specific DNA-binding.</text>
</comment>
<comment type="similarity">
    <text evidence="4">Belongs to the bZIP family.</text>
</comment>
<protein>
    <recommendedName>
        <fullName>Lytic switch protein BZLF1</fullName>
        <shortName>EB1</shortName>
    </recommendedName>
    <alternativeName>
        <fullName>Protein Z</fullName>
    </alternativeName>
    <alternativeName>
        <fullName>Trans-activator protein BZLF1</fullName>
    </alternativeName>
    <alternativeName>
        <fullName>Zebra</fullName>
    </alternativeName>
    <alternativeName>
        <fullName>Zta</fullName>
    </alternativeName>
    <alternativeName>
        <fullName>bZIP transcription factor ZEBRA</fullName>
    </alternativeName>
</protein>
<sequence>MMDPNSTSEDVKFTPDPYQVPFVQAFDQATRVYQDLGGPSQAPLPCVLWPVLPEPLPQGQLTAYHVSAAPTGSWFPAPQPAPENAYQAYAAPQLFPVSDITQNQQTNQAGGEAPQPGDNSTVQPAAAVVFACPGANQGQQLADIGAPQPAPAAAPARRTRKPLQPESLEECDSELDIKRYKNRVASRKCRAKFKHLLQHYREVASAKSSENDRLRLLLKQMCPSLDVDSIIPRTPDVLHEDLLNF</sequence>